<name>SDS3_SCHPO</name>
<accession>Q9UTB6</accession>
<organism>
    <name type="scientific">Schizosaccharomyces pombe (strain 972 / ATCC 24843)</name>
    <name type="common">Fission yeast</name>
    <dbReference type="NCBI Taxonomy" id="284812"/>
    <lineage>
        <taxon>Eukaryota</taxon>
        <taxon>Fungi</taxon>
        <taxon>Dikarya</taxon>
        <taxon>Ascomycota</taxon>
        <taxon>Taphrinomycotina</taxon>
        <taxon>Schizosaccharomycetes</taxon>
        <taxon>Schizosaccharomycetales</taxon>
        <taxon>Schizosaccharomycetaceae</taxon>
        <taxon>Schizosaccharomyces</taxon>
    </lineage>
</organism>
<protein>
    <recommendedName>
        <fullName>Transcriptional regulatory protein sds3</fullName>
    </recommendedName>
    <alternativeName>
        <fullName>Clr6 histone deacetylase complex I subunit Sds3</fullName>
    </alternativeName>
</protein>
<comment type="function">
    <text evidence="3">Component of the clr6 histone deacetylase complex I responsible for the deacetylation of lysine residues on the N-terminal part of the core histones (H2A, H2B, H3 and H4). Histone deacetylation gives a tag for epigenetic repression and plays an important role in transcriptional regulation, cell cycle progression and developmental events.</text>
</comment>
<comment type="subunit">
    <text evidence="3">Component of the clr6 histone deacetylase complex I composed of at least clr6, png2, prw1, pst1 and sds3.</text>
</comment>
<comment type="subcellular location">
    <subcellularLocation>
        <location evidence="1">Nucleus</location>
    </subcellularLocation>
</comment>
<comment type="similarity">
    <text evidence="4">Belongs to the SDS3 family.</text>
</comment>
<dbReference type="EMBL" id="CU329670">
    <property type="protein sequence ID" value="CAB61768.1"/>
    <property type="molecule type" value="Genomic_DNA"/>
</dbReference>
<dbReference type="PIR" id="T50189">
    <property type="entry name" value="T50189"/>
</dbReference>
<dbReference type="RefSeq" id="NP_594462.1">
    <property type="nucleotide sequence ID" value="NM_001019891.2"/>
</dbReference>
<dbReference type="PDB" id="8I03">
    <property type="method" value="EM"/>
    <property type="resolution" value="3.20 A"/>
    <property type="chains" value="G=1-267"/>
</dbReference>
<dbReference type="PDBsum" id="8I03"/>
<dbReference type="EMDB" id="EMD-35093"/>
<dbReference type="SMR" id="Q9UTB6"/>
<dbReference type="BioGRID" id="278193">
    <property type="interactions" value="9"/>
</dbReference>
<dbReference type="ComplexPortal" id="CPX-9129">
    <property type="entry name" value="RPD3L histone deacetylase complex"/>
</dbReference>
<dbReference type="DIP" id="DIP-29345N"/>
<dbReference type="FunCoup" id="Q9UTB6">
    <property type="interactions" value="32"/>
</dbReference>
<dbReference type="IntAct" id="Q9UTB6">
    <property type="interactions" value="5"/>
</dbReference>
<dbReference type="STRING" id="284812.Q9UTB6"/>
<dbReference type="iPTMnet" id="Q9UTB6"/>
<dbReference type="PaxDb" id="4896-SPAC25B8.02.1"/>
<dbReference type="EnsemblFungi" id="SPAC25B8.02.1">
    <property type="protein sequence ID" value="SPAC25B8.02.1:pep"/>
    <property type="gene ID" value="SPAC25B8.02"/>
</dbReference>
<dbReference type="GeneID" id="2541697"/>
<dbReference type="KEGG" id="spo:2541697"/>
<dbReference type="PomBase" id="SPAC25B8.02">
    <property type="gene designation" value="sds3"/>
</dbReference>
<dbReference type="VEuPathDB" id="FungiDB:SPAC25B8.02"/>
<dbReference type="eggNOG" id="KOG4466">
    <property type="taxonomic scope" value="Eukaryota"/>
</dbReference>
<dbReference type="HOGENOM" id="CLU_1038836_0_0_1"/>
<dbReference type="InParanoid" id="Q9UTB6"/>
<dbReference type="OMA" id="TLNFFDD"/>
<dbReference type="Reactome" id="R-SPO-3214815">
    <property type="pathway name" value="HDACs deacetylate histones"/>
</dbReference>
<dbReference type="Reactome" id="R-SPO-5689880">
    <property type="pathway name" value="Ub-specific processing proteases"/>
</dbReference>
<dbReference type="PRO" id="PR:Q9UTB6"/>
<dbReference type="Proteomes" id="UP000002485">
    <property type="component" value="Chromosome I"/>
</dbReference>
<dbReference type="GO" id="GO:0000785">
    <property type="term" value="C:chromatin"/>
    <property type="evidence" value="ECO:0000314"/>
    <property type="project" value="PomBase"/>
</dbReference>
<dbReference type="GO" id="GO:0033698">
    <property type="term" value="C:Rpd3L complex"/>
    <property type="evidence" value="ECO:0000314"/>
    <property type="project" value="PomBase"/>
</dbReference>
<dbReference type="GO" id="GO:0070210">
    <property type="term" value="C:Rpd3L-Expanded complex"/>
    <property type="evidence" value="ECO:0000314"/>
    <property type="project" value="PomBase"/>
</dbReference>
<dbReference type="GO" id="GO:0070822">
    <property type="term" value="C:Sin3-type complex"/>
    <property type="evidence" value="ECO:0000318"/>
    <property type="project" value="GO_Central"/>
</dbReference>
<dbReference type="GO" id="GO:0042826">
    <property type="term" value="F:histone deacetylase binding"/>
    <property type="evidence" value="ECO:0000318"/>
    <property type="project" value="GO_Central"/>
</dbReference>
<dbReference type="GO" id="GO:0000122">
    <property type="term" value="P:negative regulation of transcription by RNA polymerase II"/>
    <property type="evidence" value="ECO:0000318"/>
    <property type="project" value="GO_Central"/>
</dbReference>
<dbReference type="GO" id="GO:0045815">
    <property type="term" value="P:transcription initiation-coupled chromatin remodeling"/>
    <property type="evidence" value="ECO:0000305"/>
    <property type="project" value="PomBase"/>
</dbReference>
<dbReference type="InterPro" id="IPR013907">
    <property type="entry name" value="Sds3"/>
</dbReference>
<dbReference type="PANTHER" id="PTHR21964">
    <property type="entry name" value="BREAST CANCER METASTASIS-SUPPRESSOR 1"/>
    <property type="match status" value="1"/>
</dbReference>
<dbReference type="Pfam" id="PF08598">
    <property type="entry name" value="Sds3"/>
    <property type="match status" value="1"/>
</dbReference>
<dbReference type="SMART" id="SM01401">
    <property type="entry name" value="Sds3"/>
    <property type="match status" value="1"/>
</dbReference>
<feature type="chain" id="PRO_0000352833" description="Transcriptional regulatory protein sds3">
    <location>
        <begin position="1"/>
        <end position="267"/>
    </location>
</feature>
<feature type="region of interest" description="Disordered" evidence="2">
    <location>
        <begin position="208"/>
        <end position="252"/>
    </location>
</feature>
<feature type="compositionally biased region" description="Basic and acidic residues" evidence="2">
    <location>
        <begin position="221"/>
        <end position="241"/>
    </location>
</feature>
<feature type="helix" evidence="5">
    <location>
        <begin position="3"/>
        <end position="5"/>
    </location>
</feature>
<feature type="helix" evidence="5">
    <location>
        <begin position="25"/>
        <end position="42"/>
    </location>
</feature>
<feature type="turn" evidence="5">
    <location>
        <begin position="43"/>
        <end position="45"/>
    </location>
</feature>
<feature type="helix" evidence="5">
    <location>
        <begin position="50"/>
        <end position="137"/>
    </location>
</feature>
<feature type="helix" evidence="5">
    <location>
        <begin position="233"/>
        <end position="241"/>
    </location>
</feature>
<feature type="turn" evidence="5">
    <location>
        <begin position="242"/>
        <end position="244"/>
    </location>
</feature>
<feature type="helix" evidence="5">
    <location>
        <begin position="249"/>
        <end position="264"/>
    </location>
</feature>
<keyword id="KW-0002">3D-structure</keyword>
<keyword id="KW-0156">Chromatin regulator</keyword>
<keyword id="KW-0539">Nucleus</keyword>
<keyword id="KW-1185">Reference proteome</keyword>
<keyword id="KW-0678">Repressor</keyword>
<keyword id="KW-0804">Transcription</keyword>
<keyword id="KW-0805">Transcription regulation</keyword>
<evidence type="ECO:0000250" key="1"/>
<evidence type="ECO:0000256" key="2">
    <source>
        <dbReference type="SAM" id="MobiDB-lite"/>
    </source>
</evidence>
<evidence type="ECO:0000269" key="3">
    <source>
    </source>
</evidence>
<evidence type="ECO:0000305" key="4"/>
<evidence type="ECO:0007829" key="5">
    <source>
        <dbReference type="PDB" id="8I03"/>
    </source>
</evidence>
<sequence>MDVLSRVFDNEKEELDPLLNNPLTASEFRAKKAELEAELESIRNGTCKTLLDLADELRRSRDEELEIAERWRTFLVNRAQEEYEVEMKAAKEEYEYRCKTLKEMVLSHLNEKKRKIYEAKDMFDIGSESSTLLLHDASSQFIDRRKLRHRRNAGNQQNTQQLPSLNFFDDYLLFPTDETAVIPQSVKNAVRNSVNSVKPTSAEASLFSPLLSMANANPTNGRERDPRASERAERDREKAVEKGLSGATEEDIQSDLQLLKKELAKKK</sequence>
<reference key="1">
    <citation type="journal article" date="2002" name="Nature">
        <title>The genome sequence of Schizosaccharomyces pombe.</title>
        <authorList>
            <person name="Wood V."/>
            <person name="Gwilliam R."/>
            <person name="Rajandream M.A."/>
            <person name="Lyne M.H."/>
            <person name="Lyne R."/>
            <person name="Stewart A."/>
            <person name="Sgouros J.G."/>
            <person name="Peat N."/>
            <person name="Hayles J."/>
            <person name="Baker S.G."/>
            <person name="Basham D."/>
            <person name="Bowman S."/>
            <person name="Brooks K."/>
            <person name="Brown D."/>
            <person name="Brown S."/>
            <person name="Chillingworth T."/>
            <person name="Churcher C.M."/>
            <person name="Collins M."/>
            <person name="Connor R."/>
            <person name="Cronin A."/>
            <person name="Davis P."/>
            <person name="Feltwell T."/>
            <person name="Fraser A."/>
            <person name="Gentles S."/>
            <person name="Goble A."/>
            <person name="Hamlin N."/>
            <person name="Harris D.E."/>
            <person name="Hidalgo J."/>
            <person name="Hodgson G."/>
            <person name="Holroyd S."/>
            <person name="Hornsby T."/>
            <person name="Howarth S."/>
            <person name="Huckle E.J."/>
            <person name="Hunt S."/>
            <person name="Jagels K."/>
            <person name="James K.D."/>
            <person name="Jones L."/>
            <person name="Jones M."/>
            <person name="Leather S."/>
            <person name="McDonald S."/>
            <person name="McLean J."/>
            <person name="Mooney P."/>
            <person name="Moule S."/>
            <person name="Mungall K.L."/>
            <person name="Murphy L.D."/>
            <person name="Niblett D."/>
            <person name="Odell C."/>
            <person name="Oliver K."/>
            <person name="O'Neil S."/>
            <person name="Pearson D."/>
            <person name="Quail M.A."/>
            <person name="Rabbinowitsch E."/>
            <person name="Rutherford K.M."/>
            <person name="Rutter S."/>
            <person name="Saunders D."/>
            <person name="Seeger K."/>
            <person name="Sharp S."/>
            <person name="Skelton J."/>
            <person name="Simmonds M.N."/>
            <person name="Squares R."/>
            <person name="Squares S."/>
            <person name="Stevens K."/>
            <person name="Taylor K."/>
            <person name="Taylor R.G."/>
            <person name="Tivey A."/>
            <person name="Walsh S.V."/>
            <person name="Warren T."/>
            <person name="Whitehead S."/>
            <person name="Woodward J.R."/>
            <person name="Volckaert G."/>
            <person name="Aert R."/>
            <person name="Robben J."/>
            <person name="Grymonprez B."/>
            <person name="Weltjens I."/>
            <person name="Vanstreels E."/>
            <person name="Rieger M."/>
            <person name="Schaefer M."/>
            <person name="Mueller-Auer S."/>
            <person name="Gabel C."/>
            <person name="Fuchs M."/>
            <person name="Duesterhoeft A."/>
            <person name="Fritzc C."/>
            <person name="Holzer E."/>
            <person name="Moestl D."/>
            <person name="Hilbert H."/>
            <person name="Borzym K."/>
            <person name="Langer I."/>
            <person name="Beck A."/>
            <person name="Lehrach H."/>
            <person name="Reinhardt R."/>
            <person name="Pohl T.M."/>
            <person name="Eger P."/>
            <person name="Zimmermann W."/>
            <person name="Wedler H."/>
            <person name="Wambutt R."/>
            <person name="Purnelle B."/>
            <person name="Goffeau A."/>
            <person name="Cadieu E."/>
            <person name="Dreano S."/>
            <person name="Gloux S."/>
            <person name="Lelaure V."/>
            <person name="Mottier S."/>
            <person name="Galibert F."/>
            <person name="Aves S.J."/>
            <person name="Xiang Z."/>
            <person name="Hunt C."/>
            <person name="Moore K."/>
            <person name="Hurst S.M."/>
            <person name="Lucas M."/>
            <person name="Rochet M."/>
            <person name="Gaillardin C."/>
            <person name="Tallada V.A."/>
            <person name="Garzon A."/>
            <person name="Thode G."/>
            <person name="Daga R.R."/>
            <person name="Cruzado L."/>
            <person name="Jimenez J."/>
            <person name="Sanchez M."/>
            <person name="del Rey F."/>
            <person name="Benito J."/>
            <person name="Dominguez A."/>
            <person name="Revuelta J.L."/>
            <person name="Moreno S."/>
            <person name="Armstrong J."/>
            <person name="Forsburg S.L."/>
            <person name="Cerutti L."/>
            <person name="Lowe T."/>
            <person name="McCombie W.R."/>
            <person name="Paulsen I."/>
            <person name="Potashkin J."/>
            <person name="Shpakovski G.V."/>
            <person name="Ussery D."/>
            <person name="Barrell B.G."/>
            <person name="Nurse P."/>
        </authorList>
    </citation>
    <scope>NUCLEOTIDE SEQUENCE [LARGE SCALE GENOMIC DNA]</scope>
    <source>
        <strain>972 / ATCC 24843</strain>
    </source>
</reference>
<reference key="2">
    <citation type="journal article" date="2007" name="Nat. Struct. Mol. Biol.">
        <title>Distinct roles of HDAC complexes in promoter silencing, antisense suppression and DNA damage protection.</title>
        <authorList>
            <person name="Nicolas E."/>
            <person name="Yamada T."/>
            <person name="Cam H.P."/>
            <person name="Fitzgerald P.C."/>
            <person name="Kobayashi R."/>
            <person name="Grewal S.I.S."/>
        </authorList>
    </citation>
    <scope>IDENTIFICATION BY MASS SPECTROMETRY</scope>
    <scope>IDENTIFICATION IN THE CLR6 COMPLEX I</scope>
    <scope>FUNCTION OF THE CLR6 COMPLEX I</scope>
</reference>
<proteinExistence type="evidence at protein level"/>
<gene>
    <name type="primary">sds3</name>
    <name type="ORF">SPAC25B8.02</name>
</gene>